<name>RNH2_ECOLI</name>
<feature type="chain" id="PRO_0000111571" description="Ribonuclease HII">
    <location>
        <begin position="1"/>
        <end position="198"/>
    </location>
</feature>
<feature type="domain" description="RNase H type-2" evidence="2">
    <location>
        <begin position="10"/>
        <end position="198"/>
    </location>
</feature>
<feature type="binding site" evidence="1">
    <location>
        <position position="16"/>
    </location>
    <ligand>
        <name>a divalent metal cation</name>
        <dbReference type="ChEBI" id="CHEBI:60240"/>
    </ligand>
</feature>
<feature type="binding site" evidence="1">
    <location>
        <position position="17"/>
    </location>
    <ligand>
        <name>a divalent metal cation</name>
        <dbReference type="ChEBI" id="CHEBI:60240"/>
    </ligand>
</feature>
<feature type="binding site" evidence="1">
    <location>
        <position position="108"/>
    </location>
    <ligand>
        <name>a divalent metal cation</name>
        <dbReference type="ChEBI" id="CHEBI:60240"/>
    </ligand>
</feature>
<feature type="sequence conflict" description="In Ref. 1 and 2." evidence="4" ref="1 2">
    <original>LAS</original>
    <variation>TCVLILVSRLSKPESEDV</variation>
    <location>
        <begin position="196"/>
        <end position="198"/>
    </location>
</feature>
<feature type="strand" evidence="5">
    <location>
        <begin position="12"/>
        <end position="18"/>
    </location>
</feature>
<feature type="strand" evidence="5">
    <location>
        <begin position="23"/>
        <end position="25"/>
    </location>
</feature>
<feature type="strand" evidence="5">
    <location>
        <begin position="27"/>
        <end position="33"/>
    </location>
</feature>
<feature type="strand" evidence="6">
    <location>
        <begin position="36"/>
        <end position="38"/>
    </location>
</feature>
<feature type="turn" evidence="5">
    <location>
        <begin position="46"/>
        <end position="48"/>
    </location>
</feature>
<feature type="helix" evidence="5">
    <location>
        <begin position="51"/>
        <end position="64"/>
    </location>
</feature>
<feature type="strand" evidence="5">
    <location>
        <begin position="66"/>
        <end position="73"/>
    </location>
</feature>
<feature type="helix" evidence="5">
    <location>
        <begin position="75"/>
        <end position="96"/>
    </location>
</feature>
<feature type="strand" evidence="5">
    <location>
        <begin position="103"/>
        <end position="110"/>
    </location>
</feature>
<feature type="strand" evidence="5">
    <location>
        <begin position="119"/>
        <end position="122"/>
    </location>
</feature>
<feature type="helix" evidence="5">
    <location>
        <begin position="125"/>
        <end position="127"/>
    </location>
</feature>
<feature type="helix" evidence="5">
    <location>
        <begin position="130"/>
        <end position="153"/>
    </location>
</feature>
<feature type="helix" evidence="5">
    <location>
        <begin position="155"/>
        <end position="157"/>
    </location>
</feature>
<feature type="helix" evidence="5">
    <location>
        <begin position="159"/>
        <end position="162"/>
    </location>
</feature>
<feature type="helix" evidence="5">
    <location>
        <begin position="168"/>
        <end position="177"/>
    </location>
</feature>
<feature type="helix" evidence="5">
    <location>
        <begin position="188"/>
        <end position="193"/>
    </location>
</feature>
<sequence>MIEFVYPHTQLVAGVDEVGRGPLVGAVVTAAVILDPARPIAGLNDSKKLSEKRRLALYEEIKEKALSWSLGRAEPHEIDELNILHATMLAMQRAVAGLHIAPEYVLIDGNRCPKLPMPAMAVVKGDSRVPEISAASILAKVTRDAEMAALDIVFPQYGFAQHKGYPTAFHLEKLAEHGATEHHRRSFGPVKRALGLAS</sequence>
<reference key="1">
    <citation type="journal article" date="1987" name="J. Bacteriol.">
        <title>Sequence analysis of the Escherichia coli dnaE gene.</title>
        <authorList>
            <person name="Tomasiewicz H.G."/>
            <person name="McHenry C.S."/>
        </authorList>
    </citation>
    <scope>NUCLEOTIDE SEQUENCE [GENOMIC DNA]</scope>
</reference>
<reference key="2">
    <citation type="submission" date="1996-02" db="EMBL/GenBank/DDBJ databases">
        <title>Systematic sequencing of the Escherichia coli genome: analysis of the 4.0 - 6.0 min (189,987 - 281,416bp) region.</title>
        <authorList>
            <person name="Takemoto K."/>
            <person name="Mori H."/>
            <person name="Murayama N."/>
            <person name="Kataoka K."/>
            <person name="Yano M."/>
            <person name="Itoh T."/>
            <person name="Yamamoto Y."/>
            <person name="Inokuchi H."/>
            <person name="Miki T."/>
            <person name="Hatada E."/>
            <person name="Fukuda R."/>
            <person name="Ichihara S."/>
            <person name="Mizuno T."/>
            <person name="Makino K."/>
            <person name="Nakata A."/>
            <person name="Yura T."/>
            <person name="Sampei G."/>
            <person name="Mizobuchi K."/>
        </authorList>
    </citation>
    <scope>NUCLEOTIDE SEQUENCE [LARGE SCALE GENOMIC DNA]</scope>
    <source>
        <strain>K12 / W3110 / ATCC 27325 / DSM 5911</strain>
    </source>
</reference>
<reference key="3">
    <citation type="submission" date="1997-01" db="EMBL/GenBank/DDBJ databases">
        <title>Sequence of minutes 4-25 of Escherichia coli.</title>
        <authorList>
            <person name="Chung E."/>
            <person name="Allen E."/>
            <person name="Araujo R."/>
            <person name="Aparicio A.M."/>
            <person name="Davis K."/>
            <person name="Duncan M."/>
            <person name="Federspiel N."/>
            <person name="Hyman R."/>
            <person name="Kalman S."/>
            <person name="Komp C."/>
            <person name="Kurdi O."/>
            <person name="Lew H."/>
            <person name="Lin D."/>
            <person name="Namath A."/>
            <person name="Oefner P."/>
            <person name="Roberts D."/>
            <person name="Schramm S."/>
            <person name="Davis R.W."/>
        </authorList>
    </citation>
    <scope>NUCLEOTIDE SEQUENCE [LARGE SCALE GENOMIC DNA]</scope>
    <source>
        <strain>K12 / MG1655 / ATCC 47076</strain>
    </source>
</reference>
<reference key="4">
    <citation type="journal article" date="1997" name="Science">
        <title>The complete genome sequence of Escherichia coli K-12.</title>
        <authorList>
            <person name="Blattner F.R."/>
            <person name="Plunkett G. III"/>
            <person name="Bloch C.A."/>
            <person name="Perna N.T."/>
            <person name="Burland V."/>
            <person name="Riley M."/>
            <person name="Collado-Vides J."/>
            <person name="Glasner J.D."/>
            <person name="Rode C.K."/>
            <person name="Mayhew G.F."/>
            <person name="Gregor J."/>
            <person name="Davis N.W."/>
            <person name="Kirkpatrick H.A."/>
            <person name="Goeden M.A."/>
            <person name="Rose D.J."/>
            <person name="Mau B."/>
            <person name="Shao Y."/>
        </authorList>
    </citation>
    <scope>NUCLEOTIDE SEQUENCE [LARGE SCALE GENOMIC DNA]</scope>
    <source>
        <strain>K12 / MG1655 / ATCC 47076</strain>
    </source>
</reference>
<reference key="5">
    <citation type="journal article" date="2006" name="Mol. Syst. Biol.">
        <title>Highly accurate genome sequences of Escherichia coli K-12 strains MG1655 and W3110.</title>
        <authorList>
            <person name="Hayashi K."/>
            <person name="Morooka N."/>
            <person name="Yamamoto Y."/>
            <person name="Fujita K."/>
            <person name="Isono K."/>
            <person name="Choi S."/>
            <person name="Ohtsubo E."/>
            <person name="Baba T."/>
            <person name="Wanner B.L."/>
            <person name="Mori H."/>
            <person name="Horiuchi T."/>
        </authorList>
    </citation>
    <scope>NUCLEOTIDE SEQUENCE [LARGE SCALE GENOMIC DNA]</scope>
    <scope>SEQUENCE REVISION TO 196-198</scope>
    <source>
        <strain>K12 / W3110 / ATCC 27325 / DSM 5911</strain>
    </source>
</reference>
<reference key="6">
    <citation type="journal article" date="1990" name="Proc. Natl. Acad. Sci. U.S.A.">
        <title>Isolation and characterization of a second RNase H (RNase HII) of Escherichia coli K-12 encoded by the rnhB gene.</title>
        <authorList>
            <person name="Itaya M."/>
        </authorList>
    </citation>
    <scope>PROTEIN SEQUENCE OF 1-11</scope>
    <scope>FUNCTION</scope>
    <source>
        <strain>K12</strain>
    </source>
</reference>
<reference key="7">
    <citation type="journal article" date="1999" name="Biochemistry">
        <title>Identification of the genes encoding Mn2+-dependent RNase HII and Mg2+-dependent RNase HIII from Bacillus subtilis: classification of RNases H into three families.</title>
        <authorList>
            <person name="Ohtani N."/>
            <person name="Haruki M."/>
            <person name="Morikawa M."/>
            <person name="Crouch R.J."/>
            <person name="Itaya M."/>
            <person name="Kanaya S."/>
        </authorList>
    </citation>
    <scope>CHARACTERIZATION</scope>
</reference>
<gene>
    <name type="primary">rnhB</name>
    <name type="ordered locus">b0183</name>
    <name type="ordered locus">JW0178</name>
</gene>
<accession>P10442</accession>
<accession>P78265</accession>
<protein>
    <recommendedName>
        <fullName>Ribonuclease HII</fullName>
        <shortName>RNase HII</shortName>
        <ecNumber>3.1.26.4</ecNumber>
    </recommendedName>
</protein>
<keyword id="KW-0002">3D-structure</keyword>
<keyword id="KW-0963">Cytoplasm</keyword>
<keyword id="KW-0903">Direct protein sequencing</keyword>
<keyword id="KW-0255">Endonuclease</keyword>
<keyword id="KW-0378">Hydrolase</keyword>
<keyword id="KW-0464">Manganese</keyword>
<keyword id="KW-0479">Metal-binding</keyword>
<keyword id="KW-0540">Nuclease</keyword>
<keyword id="KW-1185">Reference proteome</keyword>
<dbReference type="EC" id="3.1.26.4"/>
<dbReference type="EMBL" id="M19334">
    <property type="status" value="NOT_ANNOTATED_CDS"/>
    <property type="molecule type" value="Genomic_DNA"/>
</dbReference>
<dbReference type="EMBL" id="U70214">
    <property type="protein sequence ID" value="AAB08612.1"/>
    <property type="molecule type" value="Genomic_DNA"/>
</dbReference>
<dbReference type="EMBL" id="U00096">
    <property type="protein sequence ID" value="AAC73294.1"/>
    <property type="molecule type" value="Genomic_DNA"/>
</dbReference>
<dbReference type="EMBL" id="AP009048">
    <property type="protein sequence ID" value="BAA77858.2"/>
    <property type="molecule type" value="Genomic_DNA"/>
</dbReference>
<dbReference type="PIR" id="G64742">
    <property type="entry name" value="QQECBE"/>
</dbReference>
<dbReference type="RefSeq" id="NP_414725.1">
    <property type="nucleotide sequence ID" value="NC_000913.3"/>
</dbReference>
<dbReference type="RefSeq" id="WP_000569430.1">
    <property type="nucleotide sequence ID" value="NZ_SSZK01000004.1"/>
</dbReference>
<dbReference type="PDB" id="7UWE">
    <property type="method" value="EM"/>
    <property type="resolution" value="2.90 A"/>
    <property type="chains" value="C=1-198"/>
</dbReference>
<dbReference type="PDB" id="7UWH">
    <property type="method" value="EM"/>
    <property type="resolution" value="3.10 A"/>
    <property type="chains" value="C=1-198"/>
</dbReference>
<dbReference type="PDBsum" id="7UWE"/>
<dbReference type="PDBsum" id="7UWH"/>
<dbReference type="SMR" id="P10442"/>
<dbReference type="BioGRID" id="4261585">
    <property type="interactions" value="106"/>
</dbReference>
<dbReference type="FunCoup" id="P10442">
    <property type="interactions" value="477"/>
</dbReference>
<dbReference type="IntAct" id="P10442">
    <property type="interactions" value="5"/>
</dbReference>
<dbReference type="STRING" id="511145.b0183"/>
<dbReference type="jPOST" id="P10442"/>
<dbReference type="PaxDb" id="511145-b0183"/>
<dbReference type="EnsemblBacteria" id="AAC73294">
    <property type="protein sequence ID" value="AAC73294"/>
    <property type="gene ID" value="b0183"/>
</dbReference>
<dbReference type="GeneID" id="93777242"/>
<dbReference type="GeneID" id="944852"/>
<dbReference type="KEGG" id="ecj:JW0178"/>
<dbReference type="KEGG" id="eco:b0183"/>
<dbReference type="KEGG" id="ecoc:C3026_00840"/>
<dbReference type="PATRIC" id="fig|1411691.4.peg.2096"/>
<dbReference type="EchoBASE" id="EB0854"/>
<dbReference type="eggNOG" id="COG0164">
    <property type="taxonomic scope" value="Bacteria"/>
</dbReference>
<dbReference type="HOGENOM" id="CLU_036532_3_2_6"/>
<dbReference type="InParanoid" id="P10442"/>
<dbReference type="OMA" id="YPTKLHL"/>
<dbReference type="OrthoDB" id="9803420at2"/>
<dbReference type="PhylomeDB" id="P10442"/>
<dbReference type="BioCyc" id="EcoCyc:EG10861-MONOMER"/>
<dbReference type="BioCyc" id="MetaCyc:EG10861-MONOMER"/>
<dbReference type="BRENDA" id="3.1.26.4">
    <property type="organism ID" value="2026"/>
</dbReference>
<dbReference type="PRO" id="PR:P10442"/>
<dbReference type="Proteomes" id="UP000000625">
    <property type="component" value="Chromosome"/>
</dbReference>
<dbReference type="GO" id="GO:0005737">
    <property type="term" value="C:cytoplasm"/>
    <property type="evidence" value="ECO:0007669"/>
    <property type="project" value="UniProtKB-SubCell"/>
</dbReference>
<dbReference type="GO" id="GO:0032299">
    <property type="term" value="C:ribonuclease H2 complex"/>
    <property type="evidence" value="ECO:0000318"/>
    <property type="project" value="GO_Central"/>
</dbReference>
<dbReference type="GO" id="GO:0030145">
    <property type="term" value="F:manganese ion binding"/>
    <property type="evidence" value="ECO:0007669"/>
    <property type="project" value="UniProtKB-UniRule"/>
</dbReference>
<dbReference type="GO" id="GO:0003723">
    <property type="term" value="F:RNA binding"/>
    <property type="evidence" value="ECO:0007669"/>
    <property type="project" value="InterPro"/>
</dbReference>
<dbReference type="GO" id="GO:0004523">
    <property type="term" value="F:RNA-DNA hybrid ribonuclease activity"/>
    <property type="evidence" value="ECO:0000314"/>
    <property type="project" value="EcoCyc"/>
</dbReference>
<dbReference type="GO" id="GO:0043137">
    <property type="term" value="P:DNA replication, removal of RNA primer"/>
    <property type="evidence" value="ECO:0000318"/>
    <property type="project" value="GO_Central"/>
</dbReference>
<dbReference type="GO" id="GO:0006298">
    <property type="term" value="P:mismatch repair"/>
    <property type="evidence" value="ECO:0000318"/>
    <property type="project" value="GO_Central"/>
</dbReference>
<dbReference type="GO" id="GO:1990516">
    <property type="term" value="P:ribonucleotide excision repair"/>
    <property type="evidence" value="ECO:0000269"/>
    <property type="project" value="EcoCyc"/>
</dbReference>
<dbReference type="CDD" id="cd07182">
    <property type="entry name" value="RNase_HII_bacteria_HII_like"/>
    <property type="match status" value="1"/>
</dbReference>
<dbReference type="FunFam" id="3.30.420.10:FF:000006">
    <property type="entry name" value="Ribonuclease HII"/>
    <property type="match status" value="1"/>
</dbReference>
<dbReference type="Gene3D" id="3.30.420.10">
    <property type="entry name" value="Ribonuclease H-like superfamily/Ribonuclease H"/>
    <property type="match status" value="1"/>
</dbReference>
<dbReference type="HAMAP" id="MF_00052_B">
    <property type="entry name" value="RNase_HII_B"/>
    <property type="match status" value="1"/>
</dbReference>
<dbReference type="InterPro" id="IPR022898">
    <property type="entry name" value="RNase_HII"/>
</dbReference>
<dbReference type="InterPro" id="IPR001352">
    <property type="entry name" value="RNase_HII/HIII"/>
</dbReference>
<dbReference type="InterPro" id="IPR024567">
    <property type="entry name" value="RNase_HII/HIII_dom"/>
</dbReference>
<dbReference type="InterPro" id="IPR012337">
    <property type="entry name" value="RNaseH-like_sf"/>
</dbReference>
<dbReference type="InterPro" id="IPR036397">
    <property type="entry name" value="RNaseH_sf"/>
</dbReference>
<dbReference type="NCBIfam" id="NF000594">
    <property type="entry name" value="PRK00015.1-1"/>
    <property type="match status" value="1"/>
</dbReference>
<dbReference type="NCBIfam" id="NF000595">
    <property type="entry name" value="PRK00015.1-3"/>
    <property type="match status" value="1"/>
</dbReference>
<dbReference type="NCBIfam" id="NF000596">
    <property type="entry name" value="PRK00015.1-4"/>
    <property type="match status" value="1"/>
</dbReference>
<dbReference type="PANTHER" id="PTHR10954">
    <property type="entry name" value="RIBONUCLEASE H2 SUBUNIT A"/>
    <property type="match status" value="1"/>
</dbReference>
<dbReference type="PANTHER" id="PTHR10954:SF18">
    <property type="entry name" value="RIBONUCLEASE HII"/>
    <property type="match status" value="1"/>
</dbReference>
<dbReference type="Pfam" id="PF01351">
    <property type="entry name" value="RNase_HII"/>
    <property type="match status" value="1"/>
</dbReference>
<dbReference type="SUPFAM" id="SSF53098">
    <property type="entry name" value="Ribonuclease H-like"/>
    <property type="match status" value="1"/>
</dbReference>
<dbReference type="PROSITE" id="PS51975">
    <property type="entry name" value="RNASE_H_2"/>
    <property type="match status" value="1"/>
</dbReference>
<comment type="function">
    <text evidence="1 3">Endonuclease that specifically degrades the RNA of RNA-DNA hybrids.</text>
</comment>
<comment type="catalytic activity">
    <reaction>
        <text>Endonucleolytic cleavage to 5'-phosphomonoester.</text>
        <dbReference type="EC" id="3.1.26.4"/>
    </reaction>
</comment>
<comment type="cofactor">
    <cofactor evidence="1">
        <name>Mn(2+)</name>
        <dbReference type="ChEBI" id="CHEBI:29035"/>
    </cofactor>
    <cofactor evidence="1">
        <name>Mg(2+)</name>
        <dbReference type="ChEBI" id="CHEBI:18420"/>
    </cofactor>
    <text evidence="1">Manganese or magnesium. Binds 1 divalent metal ion per monomer in the absence of substrate. May bind a second metal ion after substrate binding.</text>
</comment>
<comment type="subcellular location">
    <subcellularLocation>
        <location evidence="4">Cytoplasm</location>
    </subcellularLocation>
</comment>
<comment type="similarity">
    <text evidence="4">Belongs to the RNase HII family.</text>
</comment>
<evidence type="ECO:0000250" key="1"/>
<evidence type="ECO:0000255" key="2">
    <source>
        <dbReference type="PROSITE-ProRule" id="PRU01319"/>
    </source>
</evidence>
<evidence type="ECO:0000269" key="3">
    <source>
    </source>
</evidence>
<evidence type="ECO:0000305" key="4"/>
<evidence type="ECO:0007829" key="5">
    <source>
        <dbReference type="PDB" id="7UWE"/>
    </source>
</evidence>
<evidence type="ECO:0007829" key="6">
    <source>
        <dbReference type="PDB" id="7UWH"/>
    </source>
</evidence>
<organism>
    <name type="scientific">Escherichia coli (strain K12)</name>
    <dbReference type="NCBI Taxonomy" id="83333"/>
    <lineage>
        <taxon>Bacteria</taxon>
        <taxon>Pseudomonadati</taxon>
        <taxon>Pseudomonadota</taxon>
        <taxon>Gammaproteobacteria</taxon>
        <taxon>Enterobacterales</taxon>
        <taxon>Enterobacteriaceae</taxon>
        <taxon>Escherichia</taxon>
    </lineage>
</organism>
<proteinExistence type="evidence at protein level"/>